<comment type="catalytic activity">
    <reaction evidence="1">
        <text>orotidine 5'-phosphate + H(+) = UMP + CO2</text>
        <dbReference type="Rhea" id="RHEA:11596"/>
        <dbReference type="ChEBI" id="CHEBI:15378"/>
        <dbReference type="ChEBI" id="CHEBI:16526"/>
        <dbReference type="ChEBI" id="CHEBI:57538"/>
        <dbReference type="ChEBI" id="CHEBI:57865"/>
        <dbReference type="EC" id="4.1.1.23"/>
    </reaction>
</comment>
<comment type="pathway">
    <text evidence="1">Pyrimidine metabolism; UMP biosynthesis via de novo pathway; UMP from orotate: step 2/2.</text>
</comment>
<comment type="similarity">
    <text evidence="1">Belongs to the OMP decarboxylase family. Type 2 subfamily.</text>
</comment>
<keyword id="KW-0210">Decarboxylase</keyword>
<keyword id="KW-0456">Lyase</keyword>
<keyword id="KW-0665">Pyrimidine biosynthesis</keyword>
<keyword id="KW-1185">Reference proteome</keyword>
<gene>
    <name evidence="1" type="primary">pyrF</name>
    <name type="ordered locus">AZOSEA12650</name>
    <name type="ORF">ebA2293</name>
</gene>
<feature type="chain" id="PRO_1000066455" description="Orotidine 5'-phosphate decarboxylase">
    <location>
        <begin position="1"/>
        <end position="271"/>
    </location>
</feature>
<feature type="active site" description="Proton donor" evidence="1">
    <location>
        <position position="95"/>
    </location>
</feature>
<sequence>MHFMTALRAAWRTRNSLLCVGLDPDPTRFPAHLHGQPDAIFRFCSEIVDATADLVCCFKPQIAYFAAQRAEDQLEALIAHIHARHPGTPVILDAKRGDIGSSAGQYAVEAFERFGADAITVNPYMGRDSVEPYLEYTDKGVILLCRTSNPGGSDLQFLDVGGGERLFERVARLVADEWNQSGNCSLVVGATFPNEIARVRELVGDLPLLVPGIGAQGGDIAATVEAGRSADRTGLMINSSRAILYAGADHDFAAAARRAALDTRDAINRHR</sequence>
<reference key="1">
    <citation type="journal article" date="2005" name="Arch. Microbiol.">
        <title>The genome sequence of an anaerobic aromatic-degrading denitrifying bacterium, strain EbN1.</title>
        <authorList>
            <person name="Rabus R."/>
            <person name="Kube M."/>
            <person name="Heider J."/>
            <person name="Beck A."/>
            <person name="Heitmann K."/>
            <person name="Widdel F."/>
            <person name="Reinhardt R."/>
        </authorList>
    </citation>
    <scope>NUCLEOTIDE SEQUENCE [LARGE SCALE GENOMIC DNA]</scope>
    <source>
        <strain>DSM 19018 / LMG 30748 / EbN1</strain>
    </source>
</reference>
<proteinExistence type="inferred from homology"/>
<name>PYRF_AROAE</name>
<protein>
    <recommendedName>
        <fullName evidence="1">Orotidine 5'-phosphate decarboxylase</fullName>
        <ecNumber evidence="1">4.1.1.23</ecNumber>
    </recommendedName>
    <alternativeName>
        <fullName evidence="1">OMP decarboxylase</fullName>
        <shortName evidence="1">OMPDCase</shortName>
        <shortName evidence="1">OMPdecase</shortName>
    </alternativeName>
</protein>
<dbReference type="EC" id="4.1.1.23" evidence="1"/>
<dbReference type="EMBL" id="CR555306">
    <property type="protein sequence ID" value="CAI07390.1"/>
    <property type="molecule type" value="Genomic_DNA"/>
</dbReference>
<dbReference type="RefSeq" id="WP_011237110.1">
    <property type="nucleotide sequence ID" value="NC_006513.1"/>
</dbReference>
<dbReference type="SMR" id="Q5P5M2"/>
<dbReference type="STRING" id="76114.ebA2293"/>
<dbReference type="KEGG" id="eba:ebA2293"/>
<dbReference type="eggNOG" id="COG0284">
    <property type="taxonomic scope" value="Bacteria"/>
</dbReference>
<dbReference type="HOGENOM" id="CLU_060704_1_0_4"/>
<dbReference type="OrthoDB" id="9808470at2"/>
<dbReference type="UniPathway" id="UPA00070">
    <property type="reaction ID" value="UER00120"/>
</dbReference>
<dbReference type="Proteomes" id="UP000006552">
    <property type="component" value="Chromosome"/>
</dbReference>
<dbReference type="GO" id="GO:0004590">
    <property type="term" value="F:orotidine-5'-phosphate decarboxylase activity"/>
    <property type="evidence" value="ECO:0007669"/>
    <property type="project" value="UniProtKB-UniRule"/>
</dbReference>
<dbReference type="GO" id="GO:0006207">
    <property type="term" value="P:'de novo' pyrimidine nucleobase biosynthetic process"/>
    <property type="evidence" value="ECO:0007669"/>
    <property type="project" value="InterPro"/>
</dbReference>
<dbReference type="GO" id="GO:0044205">
    <property type="term" value="P:'de novo' UMP biosynthetic process"/>
    <property type="evidence" value="ECO:0007669"/>
    <property type="project" value="UniProtKB-UniRule"/>
</dbReference>
<dbReference type="CDD" id="cd04725">
    <property type="entry name" value="OMP_decarboxylase_like"/>
    <property type="match status" value="1"/>
</dbReference>
<dbReference type="Gene3D" id="3.20.20.70">
    <property type="entry name" value="Aldolase class I"/>
    <property type="match status" value="1"/>
</dbReference>
<dbReference type="HAMAP" id="MF_01215">
    <property type="entry name" value="OMPdecase_type2"/>
    <property type="match status" value="1"/>
</dbReference>
<dbReference type="InterPro" id="IPR013785">
    <property type="entry name" value="Aldolase_TIM"/>
</dbReference>
<dbReference type="InterPro" id="IPR011995">
    <property type="entry name" value="OMPdecase_type-2"/>
</dbReference>
<dbReference type="InterPro" id="IPR001754">
    <property type="entry name" value="OMPdeCOase_dom"/>
</dbReference>
<dbReference type="InterPro" id="IPR011060">
    <property type="entry name" value="RibuloseP-bd_barrel"/>
</dbReference>
<dbReference type="NCBIfam" id="TIGR02127">
    <property type="entry name" value="pyrF_sub2"/>
    <property type="match status" value="1"/>
</dbReference>
<dbReference type="PANTHER" id="PTHR43375">
    <property type="entry name" value="OROTIDINE 5'-PHOSPHATE DECARBOXYLASE"/>
    <property type="match status" value="1"/>
</dbReference>
<dbReference type="PANTHER" id="PTHR43375:SF1">
    <property type="entry name" value="OROTIDINE 5'-PHOSPHATE DECARBOXYLASE"/>
    <property type="match status" value="1"/>
</dbReference>
<dbReference type="Pfam" id="PF00215">
    <property type="entry name" value="OMPdecase"/>
    <property type="match status" value="1"/>
</dbReference>
<dbReference type="SMART" id="SM00934">
    <property type="entry name" value="OMPdecase"/>
    <property type="match status" value="1"/>
</dbReference>
<dbReference type="SUPFAM" id="SSF51366">
    <property type="entry name" value="Ribulose-phoshate binding barrel"/>
    <property type="match status" value="1"/>
</dbReference>
<organism>
    <name type="scientific">Aromatoleum aromaticum (strain DSM 19018 / LMG 30748 / EbN1)</name>
    <name type="common">Azoarcus sp. (strain EbN1)</name>
    <dbReference type="NCBI Taxonomy" id="76114"/>
    <lineage>
        <taxon>Bacteria</taxon>
        <taxon>Pseudomonadati</taxon>
        <taxon>Pseudomonadota</taxon>
        <taxon>Betaproteobacteria</taxon>
        <taxon>Rhodocyclales</taxon>
        <taxon>Rhodocyclaceae</taxon>
        <taxon>Aromatoleum</taxon>
    </lineage>
</organism>
<evidence type="ECO:0000255" key="1">
    <source>
        <dbReference type="HAMAP-Rule" id="MF_01215"/>
    </source>
</evidence>
<accession>Q5P5M2</accession>